<keyword id="KW-0249">Electron transport</keyword>
<keyword id="KW-0349">Heme</keyword>
<keyword id="KW-0408">Iron</keyword>
<keyword id="KW-0472">Membrane</keyword>
<keyword id="KW-0479">Metal-binding</keyword>
<keyword id="KW-0496">Mitochondrion</keyword>
<keyword id="KW-0999">Mitochondrion inner membrane</keyword>
<keyword id="KW-0679">Respiratory chain</keyword>
<keyword id="KW-0812">Transmembrane</keyword>
<keyword id="KW-1133">Transmembrane helix</keyword>
<keyword id="KW-0813">Transport</keyword>
<keyword id="KW-0830">Ubiquinone</keyword>
<reference key="1">
    <citation type="journal article" date="2001" name="Mol. Biol. Evol.">
        <title>Mitogenomic exploration of higher teleostean phylogenies: a case study for moderate-scale evolutionary genomics with 38 newly determined complete mitochondrial DNA sequences.</title>
        <authorList>
            <person name="Miya M."/>
            <person name="Kawaguchi A."/>
            <person name="Nishida M."/>
        </authorList>
    </citation>
    <scope>NUCLEOTIDE SEQUENCE [GENOMIC DNA]</scope>
</reference>
<comment type="function">
    <text evidence="2">Component of the ubiquinol-cytochrome c reductase complex (complex III or cytochrome b-c1 complex) that is part of the mitochondrial respiratory chain. The b-c1 complex mediates electron transfer from ubiquinol to cytochrome c. Contributes to the generation of a proton gradient across the mitochondrial membrane that is then used for ATP synthesis.</text>
</comment>
<comment type="cofactor">
    <cofactor evidence="2">
        <name>heme b</name>
        <dbReference type="ChEBI" id="CHEBI:60344"/>
    </cofactor>
    <text evidence="2">Binds 2 heme b groups non-covalently.</text>
</comment>
<comment type="subunit">
    <text evidence="2">The cytochrome bc1 complex contains 3 respiratory subunits (MT-CYB, CYC1 and UQCRFS1), 2 core proteins (UQCRC1 and UQCRC2) and probably 6 low-molecular weight proteins.</text>
</comment>
<comment type="subcellular location">
    <subcellularLocation>
        <location evidence="2">Mitochondrion inner membrane</location>
        <topology evidence="2">Multi-pass membrane protein</topology>
    </subcellularLocation>
</comment>
<comment type="miscellaneous">
    <text evidence="1">Heme 1 (or BL or b562) is low-potential and absorbs at about 562 nm, and heme 2 (or BH or b566) is high-potential and absorbs at about 566 nm.</text>
</comment>
<comment type="similarity">
    <text evidence="3 4">Belongs to the cytochrome b family.</text>
</comment>
<comment type="caution">
    <text evidence="2">The full-length protein contains only eight transmembrane helices, not nine as predicted by bioinformatics tools.</text>
</comment>
<dbReference type="EMBL" id="AP002949">
    <property type="protein sequence ID" value="BAB70429.1"/>
    <property type="molecule type" value="Genomic_DNA"/>
</dbReference>
<dbReference type="RefSeq" id="NP_443709.1">
    <property type="nucleotide sequence ID" value="NC_003196.1"/>
</dbReference>
<dbReference type="SMR" id="Q94SA4"/>
<dbReference type="GeneID" id="804436"/>
<dbReference type="CTD" id="4519"/>
<dbReference type="GO" id="GO:0005743">
    <property type="term" value="C:mitochondrial inner membrane"/>
    <property type="evidence" value="ECO:0007669"/>
    <property type="project" value="UniProtKB-SubCell"/>
</dbReference>
<dbReference type="GO" id="GO:0045275">
    <property type="term" value="C:respiratory chain complex III"/>
    <property type="evidence" value="ECO:0007669"/>
    <property type="project" value="InterPro"/>
</dbReference>
<dbReference type="GO" id="GO:0046872">
    <property type="term" value="F:metal ion binding"/>
    <property type="evidence" value="ECO:0007669"/>
    <property type="project" value="UniProtKB-KW"/>
</dbReference>
<dbReference type="GO" id="GO:0008121">
    <property type="term" value="F:ubiquinol-cytochrome-c reductase activity"/>
    <property type="evidence" value="ECO:0007669"/>
    <property type="project" value="InterPro"/>
</dbReference>
<dbReference type="GO" id="GO:0006122">
    <property type="term" value="P:mitochondrial electron transport, ubiquinol to cytochrome c"/>
    <property type="evidence" value="ECO:0007669"/>
    <property type="project" value="TreeGrafter"/>
</dbReference>
<dbReference type="CDD" id="cd00290">
    <property type="entry name" value="cytochrome_b_C"/>
    <property type="match status" value="1"/>
</dbReference>
<dbReference type="CDD" id="cd00284">
    <property type="entry name" value="Cytochrome_b_N"/>
    <property type="match status" value="1"/>
</dbReference>
<dbReference type="FunFam" id="1.20.810.10:FF:000002">
    <property type="entry name" value="Cytochrome b"/>
    <property type="match status" value="1"/>
</dbReference>
<dbReference type="Gene3D" id="1.20.810.10">
    <property type="entry name" value="Cytochrome Bc1 Complex, Chain C"/>
    <property type="match status" value="1"/>
</dbReference>
<dbReference type="InterPro" id="IPR005798">
    <property type="entry name" value="Cyt_b/b6_C"/>
</dbReference>
<dbReference type="InterPro" id="IPR036150">
    <property type="entry name" value="Cyt_b/b6_C_sf"/>
</dbReference>
<dbReference type="InterPro" id="IPR005797">
    <property type="entry name" value="Cyt_b/b6_N"/>
</dbReference>
<dbReference type="InterPro" id="IPR027387">
    <property type="entry name" value="Cytb/b6-like_sf"/>
</dbReference>
<dbReference type="InterPro" id="IPR030689">
    <property type="entry name" value="Cytochrome_b"/>
</dbReference>
<dbReference type="InterPro" id="IPR048260">
    <property type="entry name" value="Cytochrome_b_C_euk/bac"/>
</dbReference>
<dbReference type="InterPro" id="IPR048259">
    <property type="entry name" value="Cytochrome_b_N_euk/bac"/>
</dbReference>
<dbReference type="InterPro" id="IPR016174">
    <property type="entry name" value="Di-haem_cyt_TM"/>
</dbReference>
<dbReference type="PANTHER" id="PTHR19271">
    <property type="entry name" value="CYTOCHROME B"/>
    <property type="match status" value="1"/>
</dbReference>
<dbReference type="PANTHER" id="PTHR19271:SF16">
    <property type="entry name" value="CYTOCHROME B"/>
    <property type="match status" value="1"/>
</dbReference>
<dbReference type="Pfam" id="PF00032">
    <property type="entry name" value="Cytochrom_B_C"/>
    <property type="match status" value="1"/>
</dbReference>
<dbReference type="Pfam" id="PF00033">
    <property type="entry name" value="Cytochrome_B"/>
    <property type="match status" value="1"/>
</dbReference>
<dbReference type="PIRSF" id="PIRSF038885">
    <property type="entry name" value="COB"/>
    <property type="match status" value="1"/>
</dbReference>
<dbReference type="SUPFAM" id="SSF81648">
    <property type="entry name" value="a domain/subunit of cytochrome bc1 complex (Ubiquinol-cytochrome c reductase)"/>
    <property type="match status" value="1"/>
</dbReference>
<dbReference type="SUPFAM" id="SSF81342">
    <property type="entry name" value="Transmembrane di-heme cytochromes"/>
    <property type="match status" value="1"/>
</dbReference>
<dbReference type="PROSITE" id="PS51003">
    <property type="entry name" value="CYTB_CTER"/>
    <property type="match status" value="1"/>
</dbReference>
<dbReference type="PROSITE" id="PS51002">
    <property type="entry name" value="CYTB_NTER"/>
    <property type="match status" value="1"/>
</dbReference>
<protein>
    <recommendedName>
        <fullName>Cytochrome b</fullName>
    </recommendedName>
    <alternativeName>
        <fullName>Complex III subunit 3</fullName>
    </alternativeName>
    <alternativeName>
        <fullName>Complex III subunit III</fullName>
    </alternativeName>
    <alternativeName>
        <fullName>Cytochrome b-c1 complex subunit 3</fullName>
    </alternativeName>
    <alternativeName>
        <fullName>Ubiquinol-cytochrome-c reductase complex cytochrome b subunit</fullName>
    </alternativeName>
</protein>
<accession>Q94SA4</accession>
<name>CYB_PAGMA</name>
<organism>
    <name type="scientific">Pagrus major</name>
    <name type="common">Red sea bream</name>
    <name type="synonym">Chrysophrys major</name>
    <dbReference type="NCBI Taxonomy" id="143350"/>
    <lineage>
        <taxon>Eukaryota</taxon>
        <taxon>Metazoa</taxon>
        <taxon>Chordata</taxon>
        <taxon>Craniata</taxon>
        <taxon>Vertebrata</taxon>
        <taxon>Euteleostomi</taxon>
        <taxon>Actinopterygii</taxon>
        <taxon>Neopterygii</taxon>
        <taxon>Teleostei</taxon>
        <taxon>Neoteleostei</taxon>
        <taxon>Acanthomorphata</taxon>
        <taxon>Eupercaria</taxon>
        <taxon>Spariformes</taxon>
        <taxon>Sparidae</taxon>
        <taxon>Pagrus</taxon>
    </lineage>
</organism>
<feature type="chain" id="PRO_0000061338" description="Cytochrome b">
    <location>
        <begin position="1"/>
        <end position="380"/>
    </location>
</feature>
<feature type="transmembrane region" description="Helical" evidence="2">
    <location>
        <begin position="33"/>
        <end position="53"/>
    </location>
</feature>
<feature type="transmembrane region" description="Helical" evidence="2">
    <location>
        <begin position="77"/>
        <end position="98"/>
    </location>
</feature>
<feature type="transmembrane region" description="Helical" evidence="2">
    <location>
        <begin position="113"/>
        <end position="133"/>
    </location>
</feature>
<feature type="transmembrane region" description="Helical" evidence="2">
    <location>
        <begin position="178"/>
        <end position="198"/>
    </location>
</feature>
<feature type="transmembrane region" description="Helical" evidence="2">
    <location>
        <begin position="226"/>
        <end position="246"/>
    </location>
</feature>
<feature type="transmembrane region" description="Helical" evidence="2">
    <location>
        <begin position="288"/>
        <end position="308"/>
    </location>
</feature>
<feature type="transmembrane region" description="Helical" evidence="2">
    <location>
        <begin position="320"/>
        <end position="340"/>
    </location>
</feature>
<feature type="transmembrane region" description="Helical" evidence="2">
    <location>
        <begin position="347"/>
        <end position="367"/>
    </location>
</feature>
<feature type="binding site" description="axial binding residue" evidence="2">
    <location>
        <position position="83"/>
    </location>
    <ligand>
        <name>heme b</name>
        <dbReference type="ChEBI" id="CHEBI:60344"/>
        <label>b562</label>
    </ligand>
    <ligandPart>
        <name>Fe</name>
        <dbReference type="ChEBI" id="CHEBI:18248"/>
    </ligandPart>
</feature>
<feature type="binding site" description="axial binding residue" evidence="2">
    <location>
        <position position="97"/>
    </location>
    <ligand>
        <name>heme b</name>
        <dbReference type="ChEBI" id="CHEBI:60344"/>
        <label>b566</label>
    </ligand>
    <ligandPart>
        <name>Fe</name>
        <dbReference type="ChEBI" id="CHEBI:18248"/>
    </ligandPart>
</feature>
<feature type="binding site" description="axial binding residue" evidence="2">
    <location>
        <position position="182"/>
    </location>
    <ligand>
        <name>heme b</name>
        <dbReference type="ChEBI" id="CHEBI:60344"/>
        <label>b562</label>
    </ligand>
    <ligandPart>
        <name>Fe</name>
        <dbReference type="ChEBI" id="CHEBI:18248"/>
    </ligandPart>
</feature>
<feature type="binding site" description="axial binding residue" evidence="2">
    <location>
        <position position="196"/>
    </location>
    <ligand>
        <name>heme b</name>
        <dbReference type="ChEBI" id="CHEBI:60344"/>
        <label>b566</label>
    </ligand>
    <ligandPart>
        <name>Fe</name>
        <dbReference type="ChEBI" id="CHEBI:18248"/>
    </ligandPart>
</feature>
<feature type="binding site" evidence="2">
    <location>
        <position position="201"/>
    </location>
    <ligand>
        <name>a ubiquinone</name>
        <dbReference type="ChEBI" id="CHEBI:16389"/>
    </ligand>
</feature>
<geneLocation type="mitochondrion"/>
<sequence>MASLRKTHPLLKIANHALVDLPAPSNISVWWNFGSLLGLCLISQILTGLFLAMHYTSDIATAFSSVAHICRDVNYGWLIRNLHANGASFFFICIYLHIGRGLYYGSYLYKETWNIGVVLLLLVMATAFVGYVLPWGQMSFWGATVITNLLSAVPYVGGTLVQWIWGGFSVDNATLTRFFAFHFLLPFIVAAMTMLHLLFLHETGSNNPLGLNSDTDKISFHPYFSYKDLLGFAAVIILLTCLALFTPNLLGDPDNFTPANPLVTPPHIKPEWYFLFAYAILRSIPNKLGGVLALLASILVLMVVPILHTSKQRSLTFRPVTQFLFWALIANVAILTWIGGMPVEDPYIIIGQIASLTYFALFLLIMPMAALVENKVLGWQ</sequence>
<gene>
    <name type="primary">mt-cyb</name>
    <name type="synonym">cob</name>
    <name type="synonym">cytb</name>
    <name type="synonym">mtcyb</name>
</gene>
<proteinExistence type="inferred from homology"/>
<evidence type="ECO:0000250" key="1"/>
<evidence type="ECO:0000250" key="2">
    <source>
        <dbReference type="UniProtKB" id="P00157"/>
    </source>
</evidence>
<evidence type="ECO:0000255" key="3">
    <source>
        <dbReference type="PROSITE-ProRule" id="PRU00967"/>
    </source>
</evidence>
<evidence type="ECO:0000255" key="4">
    <source>
        <dbReference type="PROSITE-ProRule" id="PRU00968"/>
    </source>
</evidence>